<accession>A9B7I9</accession>
<dbReference type="EC" id="3.1.1.29" evidence="1"/>
<dbReference type="EMBL" id="CP000875">
    <property type="protein sequence ID" value="ABX02962.1"/>
    <property type="molecule type" value="Genomic_DNA"/>
</dbReference>
<dbReference type="SMR" id="A9B7I9"/>
<dbReference type="FunCoup" id="A9B7I9">
    <property type="interactions" value="437"/>
</dbReference>
<dbReference type="STRING" id="316274.Haur_0310"/>
<dbReference type="KEGG" id="hau:Haur_0310"/>
<dbReference type="eggNOG" id="COG0193">
    <property type="taxonomic scope" value="Bacteria"/>
</dbReference>
<dbReference type="HOGENOM" id="CLU_062456_4_1_0"/>
<dbReference type="InParanoid" id="A9B7I9"/>
<dbReference type="Proteomes" id="UP000000787">
    <property type="component" value="Chromosome"/>
</dbReference>
<dbReference type="GO" id="GO:0005737">
    <property type="term" value="C:cytoplasm"/>
    <property type="evidence" value="ECO:0007669"/>
    <property type="project" value="UniProtKB-SubCell"/>
</dbReference>
<dbReference type="GO" id="GO:0004045">
    <property type="term" value="F:peptidyl-tRNA hydrolase activity"/>
    <property type="evidence" value="ECO:0007669"/>
    <property type="project" value="UniProtKB-UniRule"/>
</dbReference>
<dbReference type="GO" id="GO:0000049">
    <property type="term" value="F:tRNA binding"/>
    <property type="evidence" value="ECO:0007669"/>
    <property type="project" value="UniProtKB-UniRule"/>
</dbReference>
<dbReference type="GO" id="GO:0006515">
    <property type="term" value="P:protein quality control for misfolded or incompletely synthesized proteins"/>
    <property type="evidence" value="ECO:0007669"/>
    <property type="project" value="UniProtKB-UniRule"/>
</dbReference>
<dbReference type="GO" id="GO:0072344">
    <property type="term" value="P:rescue of stalled ribosome"/>
    <property type="evidence" value="ECO:0007669"/>
    <property type="project" value="UniProtKB-UniRule"/>
</dbReference>
<dbReference type="CDD" id="cd00462">
    <property type="entry name" value="PTH"/>
    <property type="match status" value="1"/>
</dbReference>
<dbReference type="FunFam" id="3.40.50.1470:FF:000001">
    <property type="entry name" value="Peptidyl-tRNA hydrolase"/>
    <property type="match status" value="1"/>
</dbReference>
<dbReference type="Gene3D" id="3.40.50.1470">
    <property type="entry name" value="Peptidyl-tRNA hydrolase"/>
    <property type="match status" value="1"/>
</dbReference>
<dbReference type="HAMAP" id="MF_00083">
    <property type="entry name" value="Pept_tRNA_hydro_bact"/>
    <property type="match status" value="1"/>
</dbReference>
<dbReference type="InterPro" id="IPR001328">
    <property type="entry name" value="Pept_tRNA_hydro"/>
</dbReference>
<dbReference type="InterPro" id="IPR036416">
    <property type="entry name" value="Pept_tRNA_hydro_sf"/>
</dbReference>
<dbReference type="NCBIfam" id="TIGR00447">
    <property type="entry name" value="pth"/>
    <property type="match status" value="1"/>
</dbReference>
<dbReference type="PANTHER" id="PTHR17224">
    <property type="entry name" value="PEPTIDYL-TRNA HYDROLASE"/>
    <property type="match status" value="1"/>
</dbReference>
<dbReference type="PANTHER" id="PTHR17224:SF1">
    <property type="entry name" value="PEPTIDYL-TRNA HYDROLASE"/>
    <property type="match status" value="1"/>
</dbReference>
<dbReference type="Pfam" id="PF01195">
    <property type="entry name" value="Pept_tRNA_hydro"/>
    <property type="match status" value="1"/>
</dbReference>
<dbReference type="SUPFAM" id="SSF53178">
    <property type="entry name" value="Peptidyl-tRNA hydrolase-like"/>
    <property type="match status" value="1"/>
</dbReference>
<feature type="chain" id="PRO_1000092949" description="Peptidyl-tRNA hydrolase">
    <location>
        <begin position="1"/>
        <end position="206"/>
    </location>
</feature>
<feature type="region of interest" description="Disordered" evidence="2">
    <location>
        <begin position="185"/>
        <end position="206"/>
    </location>
</feature>
<feature type="compositionally biased region" description="Basic and acidic residues" evidence="2">
    <location>
        <begin position="189"/>
        <end position="206"/>
    </location>
</feature>
<feature type="active site" description="Proton acceptor" evidence="1">
    <location>
        <position position="19"/>
    </location>
</feature>
<feature type="binding site" evidence="1">
    <location>
        <position position="14"/>
    </location>
    <ligand>
        <name>tRNA</name>
        <dbReference type="ChEBI" id="CHEBI:17843"/>
    </ligand>
</feature>
<feature type="binding site" evidence="1">
    <location>
        <position position="64"/>
    </location>
    <ligand>
        <name>tRNA</name>
        <dbReference type="ChEBI" id="CHEBI:17843"/>
    </ligand>
</feature>
<feature type="binding site" evidence="1">
    <location>
        <position position="66"/>
    </location>
    <ligand>
        <name>tRNA</name>
        <dbReference type="ChEBI" id="CHEBI:17843"/>
    </ligand>
</feature>
<feature type="site" description="Discriminates between blocked and unblocked aminoacyl-tRNA" evidence="1">
    <location>
        <position position="9"/>
    </location>
</feature>
<feature type="site" description="Stabilizes the basic form of H active site to accept a proton" evidence="1">
    <location>
        <position position="92"/>
    </location>
</feature>
<gene>
    <name evidence="1" type="primary">pth</name>
    <name type="ordered locus">Haur_0310</name>
</gene>
<protein>
    <recommendedName>
        <fullName evidence="1">Peptidyl-tRNA hydrolase</fullName>
        <shortName evidence="1">Pth</shortName>
        <ecNumber evidence="1">3.1.1.29</ecNumber>
    </recommendedName>
</protein>
<keyword id="KW-0963">Cytoplasm</keyword>
<keyword id="KW-0378">Hydrolase</keyword>
<keyword id="KW-0694">RNA-binding</keyword>
<keyword id="KW-0820">tRNA-binding</keyword>
<organism>
    <name type="scientific">Herpetosiphon aurantiacus (strain ATCC 23779 / DSM 785 / 114-95)</name>
    <dbReference type="NCBI Taxonomy" id="316274"/>
    <lineage>
        <taxon>Bacteria</taxon>
        <taxon>Bacillati</taxon>
        <taxon>Chloroflexota</taxon>
        <taxon>Chloroflexia</taxon>
        <taxon>Herpetosiphonales</taxon>
        <taxon>Herpetosiphonaceae</taxon>
        <taxon>Herpetosiphon</taxon>
    </lineage>
</organism>
<reference key="1">
    <citation type="journal article" date="2011" name="Stand. Genomic Sci.">
        <title>Complete genome sequence of the filamentous gliding predatory bacterium Herpetosiphon aurantiacus type strain (114-95(T)).</title>
        <authorList>
            <person name="Kiss H."/>
            <person name="Nett M."/>
            <person name="Domin N."/>
            <person name="Martin K."/>
            <person name="Maresca J.A."/>
            <person name="Copeland A."/>
            <person name="Lapidus A."/>
            <person name="Lucas S."/>
            <person name="Berry K.W."/>
            <person name="Glavina Del Rio T."/>
            <person name="Dalin E."/>
            <person name="Tice H."/>
            <person name="Pitluck S."/>
            <person name="Richardson P."/>
            <person name="Bruce D."/>
            <person name="Goodwin L."/>
            <person name="Han C."/>
            <person name="Detter J.C."/>
            <person name="Schmutz J."/>
            <person name="Brettin T."/>
            <person name="Land M."/>
            <person name="Hauser L."/>
            <person name="Kyrpides N.C."/>
            <person name="Ivanova N."/>
            <person name="Goeker M."/>
            <person name="Woyke T."/>
            <person name="Klenk H.P."/>
            <person name="Bryant D.A."/>
        </authorList>
    </citation>
    <scope>NUCLEOTIDE SEQUENCE [LARGE SCALE GENOMIC DNA]</scope>
    <source>
        <strain>ATCC 23779 / DSM 785 / 114-95</strain>
    </source>
</reference>
<comment type="function">
    <text evidence="1">Hydrolyzes ribosome-free peptidyl-tRNAs (with 1 or more amino acids incorporated), which drop off the ribosome during protein synthesis, or as a result of ribosome stalling.</text>
</comment>
<comment type="function">
    <text evidence="1">Catalyzes the release of premature peptidyl moieties from peptidyl-tRNA molecules trapped in stalled 50S ribosomal subunits, and thus maintains levels of free tRNAs and 50S ribosomes.</text>
</comment>
<comment type="catalytic activity">
    <reaction evidence="1">
        <text>an N-acyl-L-alpha-aminoacyl-tRNA + H2O = an N-acyl-L-amino acid + a tRNA + H(+)</text>
        <dbReference type="Rhea" id="RHEA:54448"/>
        <dbReference type="Rhea" id="RHEA-COMP:10123"/>
        <dbReference type="Rhea" id="RHEA-COMP:13883"/>
        <dbReference type="ChEBI" id="CHEBI:15377"/>
        <dbReference type="ChEBI" id="CHEBI:15378"/>
        <dbReference type="ChEBI" id="CHEBI:59874"/>
        <dbReference type="ChEBI" id="CHEBI:78442"/>
        <dbReference type="ChEBI" id="CHEBI:138191"/>
        <dbReference type="EC" id="3.1.1.29"/>
    </reaction>
</comment>
<comment type="subunit">
    <text evidence="1">Monomer.</text>
</comment>
<comment type="subcellular location">
    <subcellularLocation>
        <location evidence="1">Cytoplasm</location>
    </subcellularLocation>
</comment>
<comment type="similarity">
    <text evidence="1">Belongs to the PTH family.</text>
</comment>
<proteinExistence type="inferred from homology"/>
<name>PTH_HERA2</name>
<evidence type="ECO:0000255" key="1">
    <source>
        <dbReference type="HAMAP-Rule" id="MF_00083"/>
    </source>
</evidence>
<evidence type="ECO:0000256" key="2">
    <source>
        <dbReference type="SAM" id="MobiDB-lite"/>
    </source>
</evidence>
<sequence>MFLIVGLGNPGEKYLNNRHNVGFQCVAEFARRHHLSFDGKRSDARIAEGLVNGQRVALARPQTFMNDSGKSVVGLVNWYKIDPASELLVVYDDLDLPFGTIKLRNQGSSGGQRGMNSIIQLLGTQKFARLRFGIGRPPEGWEVINFVLGNWNAAERETLPKLYDRAVEACELCLSDGVTKAMNAVNGEAPKKSKDQAKEPANEQPR</sequence>